<accession>P04466</accession>
<name>MYL11_RAT</name>
<comment type="function">
    <text evidence="1 4">Myosin regulatory subunit that plays an essential to maintain muscle integrity during early development (By similarity). Plays a role in muscle contraction (By similarity).</text>
</comment>
<comment type="subunit">
    <text evidence="6">Myosin is a hexamer of 2 heavy chains and 4 light chains.</text>
</comment>
<comment type="miscellaneous">
    <text>This chain binds calcium.</text>
</comment>
<keyword id="KW-0106">Calcium</keyword>
<keyword id="KW-0479">Metal-binding</keyword>
<keyword id="KW-0488">Methylation</keyword>
<keyword id="KW-0505">Motor protein</keyword>
<keyword id="KW-0514">Muscle protein</keyword>
<keyword id="KW-0518">Myosin</keyword>
<keyword id="KW-0597">Phosphoprotein</keyword>
<keyword id="KW-1185">Reference proteome</keyword>
<keyword id="KW-0677">Repeat</keyword>
<protein>
    <recommendedName>
        <fullName>Myosin regulatory light chain 11</fullName>
    </recommendedName>
    <alternativeName>
        <fullName>DTNB</fullName>
    </alternativeName>
    <alternativeName>
        <fullName>Fast skeletal myosin light chain 2</fullName>
        <shortName>G2</shortName>
        <shortName>MLC-2</shortName>
    </alternativeName>
    <alternativeName>
        <fullName>Myosin light chain 11</fullName>
    </alternativeName>
    <alternativeName>
        <fullName>Myosin regulatory light chain 2, skeletal muscle isoform</fullName>
    </alternativeName>
</protein>
<organism>
    <name type="scientific">Rattus norvegicus</name>
    <name type="common">Rat</name>
    <dbReference type="NCBI Taxonomy" id="10116"/>
    <lineage>
        <taxon>Eukaryota</taxon>
        <taxon>Metazoa</taxon>
        <taxon>Chordata</taxon>
        <taxon>Craniata</taxon>
        <taxon>Vertebrata</taxon>
        <taxon>Euteleostomi</taxon>
        <taxon>Mammalia</taxon>
        <taxon>Eutheria</taxon>
        <taxon>Euarchontoglires</taxon>
        <taxon>Glires</taxon>
        <taxon>Rodentia</taxon>
        <taxon>Myomorpha</taxon>
        <taxon>Muroidea</taxon>
        <taxon>Muridae</taxon>
        <taxon>Murinae</taxon>
        <taxon>Rattus</taxon>
    </lineage>
</organism>
<proteinExistence type="evidence at protein level"/>
<sequence length="169" mass="18969">MAPKKAKRRAAAEGSSNVFSMFDQTQIQEFKEAFTVIDQNRDGIIDKEDLRDTFAAMGRLNVKNEELDAMMKEASGPINFTVFLTMFGEKLKGADPEDVITGAFKVLDPEGKGTIKKQFLEELLTTQCDRFSQEEIKNMWAAFPPDVGGNVDYKNICYVITHGDAKDQE</sequence>
<feature type="initiator methionine" description="Removed" evidence="2">
    <location>
        <position position="1"/>
    </location>
</feature>
<feature type="chain" id="PRO_0000198743" description="Myosin regulatory light chain 11">
    <location>
        <begin position="2"/>
        <end position="169"/>
    </location>
</feature>
<feature type="domain" description="EF-hand 1" evidence="5">
    <location>
        <begin position="25"/>
        <end position="60"/>
    </location>
</feature>
<feature type="domain" description="EF-hand 2" evidence="5">
    <location>
        <begin position="95"/>
        <end position="130"/>
    </location>
</feature>
<feature type="domain" description="EF-hand 3" evidence="5">
    <location>
        <begin position="131"/>
        <end position="166"/>
    </location>
</feature>
<feature type="binding site" evidence="5">
    <location>
        <position position="38"/>
    </location>
    <ligand>
        <name>Ca(2+)</name>
        <dbReference type="ChEBI" id="CHEBI:29108"/>
    </ligand>
</feature>
<feature type="binding site" evidence="5">
    <location>
        <position position="40"/>
    </location>
    <ligand>
        <name>Ca(2+)</name>
        <dbReference type="ChEBI" id="CHEBI:29108"/>
    </ligand>
</feature>
<feature type="binding site" evidence="5">
    <location>
        <position position="42"/>
    </location>
    <ligand>
        <name>Ca(2+)</name>
        <dbReference type="ChEBI" id="CHEBI:29108"/>
    </ligand>
</feature>
<feature type="binding site" evidence="5">
    <location>
        <position position="49"/>
    </location>
    <ligand>
        <name>Ca(2+)</name>
        <dbReference type="ChEBI" id="CHEBI:29108"/>
    </ligand>
</feature>
<feature type="modified residue" description="N,N,N-trimethylalanine" evidence="2">
    <location>
        <position position="2"/>
    </location>
</feature>
<feature type="modified residue" description="Phosphoserine" evidence="3">
    <location>
        <position position="15"/>
    </location>
</feature>
<feature type="modified residue" description="Phosphoserine" evidence="3">
    <location>
        <position position="16"/>
    </location>
</feature>
<feature type="modified residue" description="Phosphothreonine" evidence="8">
    <location>
        <position position="25"/>
    </location>
</feature>
<feature type="modified residue" description="Phosphothreonine" evidence="8">
    <location>
        <position position="35"/>
    </location>
</feature>
<feature type="modified residue" description="Phosphoserine" evidence="8">
    <location>
        <position position="75"/>
    </location>
</feature>
<feature type="modified residue" description="Phosphothreonine" evidence="8">
    <location>
        <position position="101"/>
    </location>
</feature>
<evidence type="ECO:0000250" key="1">
    <source>
        <dbReference type="UniProtKB" id="O93409"/>
    </source>
</evidence>
<evidence type="ECO:0000250" key="2">
    <source>
        <dbReference type="UniProtKB" id="P02608"/>
    </source>
</evidence>
<evidence type="ECO:0000250" key="3">
    <source>
        <dbReference type="UniProtKB" id="P97457"/>
    </source>
</evidence>
<evidence type="ECO:0000250" key="4">
    <source>
        <dbReference type="UniProtKB" id="Q96A32"/>
    </source>
</evidence>
<evidence type="ECO:0000255" key="5">
    <source>
        <dbReference type="PROSITE-ProRule" id="PRU00448"/>
    </source>
</evidence>
<evidence type="ECO:0000305" key="6"/>
<evidence type="ECO:0000312" key="7">
    <source>
        <dbReference type="RGD" id="3141"/>
    </source>
</evidence>
<evidence type="ECO:0007744" key="8">
    <source>
    </source>
</evidence>
<reference key="1">
    <citation type="journal article" date="1984" name="Nucleic Acids Res.">
        <title>The nucleotide sequence of a rat myosin light chain 2 gene.</title>
        <authorList>
            <person name="Nudel U."/>
            <person name="Calvo J.M."/>
            <person name="Shani M."/>
            <person name="Levy Z."/>
        </authorList>
    </citation>
    <scope>NUCLEOTIDE SEQUENCE [GENOMIC DNA]</scope>
</reference>
<reference key="2">
    <citation type="journal article" date="1982" name="J. Biol. Chem.">
        <title>Cloning and characterization of cDNA sequences corresponding to myosin light chains 1, 2, and 3, troponin-C, troponin-T, alpha-tropomyosin, and alpha-actin.</title>
        <authorList>
            <person name="Garfinkel L.I."/>
            <person name="Periasamy M."/>
            <person name="Nadal-Ginard B."/>
        </authorList>
    </citation>
    <scope>NUCLEOTIDE SEQUENCE [MRNA] OF 70-169</scope>
</reference>
<reference key="3">
    <citation type="journal article" date="2012" name="Nat. Commun.">
        <title>Quantitative maps of protein phosphorylation sites across 14 different rat organs and tissues.</title>
        <authorList>
            <person name="Lundby A."/>
            <person name="Secher A."/>
            <person name="Lage K."/>
            <person name="Nordsborg N.B."/>
            <person name="Dmytriyev A."/>
            <person name="Lundby C."/>
            <person name="Olsen J.V."/>
        </authorList>
    </citation>
    <scope>PHOSPHORYLATION [LARGE SCALE ANALYSIS] AT THR-25; THR-35; SER-75 AND THR-101</scope>
    <scope>IDENTIFICATION BY MASS SPECTROMETRY [LARGE SCALE ANALYSIS]</scope>
</reference>
<gene>
    <name type="primary">Myl11</name>
    <name evidence="7" type="synonym">Mylpf</name>
</gene>
<dbReference type="EMBL" id="X00975">
    <property type="protein sequence ID" value="CAA25480.1"/>
    <property type="molecule type" value="Genomic_DNA"/>
</dbReference>
<dbReference type="EMBL" id="J00754">
    <property type="protein sequence ID" value="AAA41660.1"/>
    <property type="molecule type" value="mRNA"/>
</dbReference>
<dbReference type="PIR" id="A03041">
    <property type="entry name" value="MORTL2"/>
</dbReference>
<dbReference type="RefSeq" id="NP_036737.1">
    <property type="nucleotide sequence ID" value="NM_012605.2"/>
</dbReference>
<dbReference type="RefSeq" id="XP_063136857.1">
    <property type="nucleotide sequence ID" value="XM_063280787.1"/>
</dbReference>
<dbReference type="SMR" id="P04466"/>
<dbReference type="FunCoup" id="P04466">
    <property type="interactions" value="314"/>
</dbReference>
<dbReference type="IntAct" id="P04466">
    <property type="interactions" value="1"/>
</dbReference>
<dbReference type="STRING" id="10116.ENSRNOP00000023944"/>
<dbReference type="iPTMnet" id="P04466"/>
<dbReference type="PhosphoSitePlus" id="P04466"/>
<dbReference type="PaxDb" id="10116-ENSRNOP00000023944"/>
<dbReference type="Ensembl" id="ENSRNOT00000023944.7">
    <property type="protein sequence ID" value="ENSRNOP00000023944.3"/>
    <property type="gene ID" value="ENSRNOG00000017645.7"/>
</dbReference>
<dbReference type="GeneID" id="24584"/>
<dbReference type="KEGG" id="rno:24584"/>
<dbReference type="UCSC" id="RGD:3141">
    <property type="organism name" value="rat"/>
</dbReference>
<dbReference type="AGR" id="RGD:3141"/>
<dbReference type="CTD" id="29895"/>
<dbReference type="RGD" id="3141">
    <property type="gene designation" value="Myl11"/>
</dbReference>
<dbReference type="eggNOG" id="KOG0031">
    <property type="taxonomic scope" value="Eukaryota"/>
</dbReference>
<dbReference type="GeneTree" id="ENSGT00940000159038"/>
<dbReference type="HOGENOM" id="CLU_061288_9_0_1"/>
<dbReference type="InParanoid" id="P04466"/>
<dbReference type="OMA" id="KDLYAMM"/>
<dbReference type="OrthoDB" id="429467at2759"/>
<dbReference type="PhylomeDB" id="P04466"/>
<dbReference type="TreeFam" id="TF314218"/>
<dbReference type="Reactome" id="R-RNO-445355">
    <property type="pathway name" value="Smooth Muscle Contraction"/>
</dbReference>
<dbReference type="PRO" id="PR:P04466"/>
<dbReference type="Proteomes" id="UP000002494">
    <property type="component" value="Chromosome 1"/>
</dbReference>
<dbReference type="Bgee" id="ENSRNOG00000017645">
    <property type="expression patterns" value="Expressed in quadriceps femoris and 18 other cell types or tissues"/>
</dbReference>
<dbReference type="GO" id="GO:0005737">
    <property type="term" value="C:cytoplasm"/>
    <property type="evidence" value="ECO:0000318"/>
    <property type="project" value="GO_Central"/>
</dbReference>
<dbReference type="GO" id="GO:0016459">
    <property type="term" value="C:myosin complex"/>
    <property type="evidence" value="ECO:0007669"/>
    <property type="project" value="UniProtKB-KW"/>
</dbReference>
<dbReference type="GO" id="GO:0005509">
    <property type="term" value="F:calcium ion binding"/>
    <property type="evidence" value="ECO:0000318"/>
    <property type="project" value="GO_Central"/>
</dbReference>
<dbReference type="GO" id="GO:0008307">
    <property type="term" value="F:structural constituent of muscle"/>
    <property type="evidence" value="ECO:0000266"/>
    <property type="project" value="RGD"/>
</dbReference>
<dbReference type="GO" id="GO:0006955">
    <property type="term" value="P:immune response"/>
    <property type="evidence" value="ECO:0000270"/>
    <property type="project" value="RGD"/>
</dbReference>
<dbReference type="GO" id="GO:0006936">
    <property type="term" value="P:muscle contraction"/>
    <property type="evidence" value="ECO:0000266"/>
    <property type="project" value="RGD"/>
</dbReference>
<dbReference type="GO" id="GO:0007519">
    <property type="term" value="P:skeletal muscle tissue development"/>
    <property type="evidence" value="ECO:0000270"/>
    <property type="project" value="RGD"/>
</dbReference>
<dbReference type="FunFam" id="1.10.238.10:FF:000010">
    <property type="entry name" value="Myosin regulatory light chain 2, atrial isoform"/>
    <property type="match status" value="1"/>
</dbReference>
<dbReference type="FunFam" id="1.10.238.10:FF:000007">
    <property type="entry name" value="Putative myosin regulatory light chain sqh"/>
    <property type="match status" value="1"/>
</dbReference>
<dbReference type="Gene3D" id="1.10.238.10">
    <property type="entry name" value="EF-hand"/>
    <property type="match status" value="2"/>
</dbReference>
<dbReference type="InterPro" id="IPR011992">
    <property type="entry name" value="EF-hand-dom_pair"/>
</dbReference>
<dbReference type="InterPro" id="IPR018247">
    <property type="entry name" value="EF_Hand_1_Ca_BS"/>
</dbReference>
<dbReference type="InterPro" id="IPR002048">
    <property type="entry name" value="EF_hand_dom"/>
</dbReference>
<dbReference type="InterPro" id="IPR050403">
    <property type="entry name" value="Myosin_RLC"/>
</dbReference>
<dbReference type="PANTHER" id="PTHR23049">
    <property type="entry name" value="MYOSIN REGULATORY LIGHT CHAIN 2"/>
    <property type="match status" value="1"/>
</dbReference>
<dbReference type="Pfam" id="PF13405">
    <property type="entry name" value="EF-hand_6"/>
    <property type="match status" value="1"/>
</dbReference>
<dbReference type="SMART" id="SM00054">
    <property type="entry name" value="EFh"/>
    <property type="match status" value="2"/>
</dbReference>
<dbReference type="SUPFAM" id="SSF47473">
    <property type="entry name" value="EF-hand"/>
    <property type="match status" value="1"/>
</dbReference>
<dbReference type="PROSITE" id="PS00018">
    <property type="entry name" value="EF_HAND_1"/>
    <property type="match status" value="1"/>
</dbReference>
<dbReference type="PROSITE" id="PS50222">
    <property type="entry name" value="EF_HAND_2"/>
    <property type="match status" value="3"/>
</dbReference>